<proteinExistence type="inferred from homology"/>
<sequence>MSETADTNQTAVVLFSGGQDSTTCLAWALARYHRVHTVAFDYGQRHRVELACRQRVREAIGQHFAGWGARLGEDHLLDLTSLGEISDTSLTRERAIEIRDSGLPDTFVPGRNLLFLTYAAALAWRLQARHLITGVCETDYSGYPDCRDDTIKALQVALNLGMDSHFVLHTPLMWRDKAQTWALAETLGGADLVELIAEHTHTCYLGDRTQRHDWGYGCGECPACRLRAQGWRRHRGLC</sequence>
<evidence type="ECO:0000255" key="1">
    <source>
        <dbReference type="HAMAP-Rule" id="MF_01633"/>
    </source>
</evidence>
<feature type="chain" id="PRO_0000336887" description="7-cyano-7-deazaguanine synthase">
    <location>
        <begin position="1"/>
        <end position="238"/>
    </location>
</feature>
<feature type="binding site" evidence="1">
    <location>
        <begin position="15"/>
        <end position="25"/>
    </location>
    <ligand>
        <name>ATP</name>
        <dbReference type="ChEBI" id="CHEBI:30616"/>
    </ligand>
</feature>
<feature type="binding site" evidence="1">
    <location>
        <position position="203"/>
    </location>
    <ligand>
        <name>Zn(2+)</name>
        <dbReference type="ChEBI" id="CHEBI:29105"/>
    </ligand>
</feature>
<feature type="binding site" evidence="1">
    <location>
        <position position="218"/>
    </location>
    <ligand>
        <name>Zn(2+)</name>
        <dbReference type="ChEBI" id="CHEBI:29105"/>
    </ligand>
</feature>
<feature type="binding site" evidence="1">
    <location>
        <position position="221"/>
    </location>
    <ligand>
        <name>Zn(2+)</name>
        <dbReference type="ChEBI" id="CHEBI:29105"/>
    </ligand>
</feature>
<feature type="binding site" evidence="1">
    <location>
        <position position="224"/>
    </location>
    <ligand>
        <name>Zn(2+)</name>
        <dbReference type="ChEBI" id="CHEBI:29105"/>
    </ligand>
</feature>
<organism>
    <name type="scientific">Alkalilimnicola ehrlichii (strain ATCC BAA-1101 / DSM 17681 / MLHE-1)</name>
    <dbReference type="NCBI Taxonomy" id="187272"/>
    <lineage>
        <taxon>Bacteria</taxon>
        <taxon>Pseudomonadati</taxon>
        <taxon>Pseudomonadota</taxon>
        <taxon>Gammaproteobacteria</taxon>
        <taxon>Chromatiales</taxon>
        <taxon>Ectothiorhodospiraceae</taxon>
        <taxon>Alkalilimnicola</taxon>
    </lineage>
</organism>
<protein>
    <recommendedName>
        <fullName evidence="1">7-cyano-7-deazaguanine synthase</fullName>
        <ecNumber evidence="1">6.3.4.20</ecNumber>
    </recommendedName>
    <alternativeName>
        <fullName evidence="1">7-cyano-7-carbaguanine synthase</fullName>
    </alternativeName>
    <alternativeName>
        <fullName evidence="1">PreQ(0) synthase</fullName>
    </alternativeName>
    <alternativeName>
        <fullName evidence="1">Queuosine biosynthesis protein QueC</fullName>
    </alternativeName>
</protein>
<gene>
    <name evidence="1" type="primary">queC</name>
    <name type="ordered locus">Mlg_2697</name>
</gene>
<name>QUEC_ALKEH</name>
<keyword id="KW-0067">ATP-binding</keyword>
<keyword id="KW-0436">Ligase</keyword>
<keyword id="KW-0479">Metal-binding</keyword>
<keyword id="KW-0547">Nucleotide-binding</keyword>
<keyword id="KW-0671">Queuosine biosynthesis</keyword>
<keyword id="KW-1185">Reference proteome</keyword>
<keyword id="KW-0862">Zinc</keyword>
<accession>Q0A550</accession>
<reference key="1">
    <citation type="submission" date="2006-08" db="EMBL/GenBank/DDBJ databases">
        <title>Complete sequence of Alkalilimnicola ehrilichei MLHE-1.</title>
        <authorList>
            <person name="Copeland A."/>
            <person name="Lucas S."/>
            <person name="Lapidus A."/>
            <person name="Barry K."/>
            <person name="Detter J.C."/>
            <person name="Glavina del Rio T."/>
            <person name="Hammon N."/>
            <person name="Israni S."/>
            <person name="Dalin E."/>
            <person name="Tice H."/>
            <person name="Pitluck S."/>
            <person name="Sims D."/>
            <person name="Brettin T."/>
            <person name="Bruce D."/>
            <person name="Han C."/>
            <person name="Tapia R."/>
            <person name="Gilna P."/>
            <person name="Schmutz J."/>
            <person name="Larimer F."/>
            <person name="Land M."/>
            <person name="Hauser L."/>
            <person name="Kyrpides N."/>
            <person name="Mikhailova N."/>
            <person name="Oremland R.S."/>
            <person name="Hoeft S.E."/>
            <person name="Switzer-Blum J."/>
            <person name="Kulp T."/>
            <person name="King G."/>
            <person name="Tabita R."/>
            <person name="Witte B."/>
            <person name="Santini J.M."/>
            <person name="Basu P."/>
            <person name="Hollibaugh J.T."/>
            <person name="Xie G."/>
            <person name="Stolz J.F."/>
            <person name="Richardson P."/>
        </authorList>
    </citation>
    <scope>NUCLEOTIDE SEQUENCE [LARGE SCALE GENOMIC DNA]</scope>
    <source>
        <strain>ATCC BAA-1101 / DSM 17681 / MLHE-1</strain>
    </source>
</reference>
<comment type="function">
    <text evidence="1">Catalyzes the ATP-dependent conversion of 7-carboxy-7-deazaguanine (CDG) to 7-cyano-7-deazaguanine (preQ(0)).</text>
</comment>
<comment type="catalytic activity">
    <reaction evidence="1">
        <text>7-carboxy-7-deazaguanine + NH4(+) + ATP = 7-cyano-7-deazaguanine + ADP + phosphate + H2O + H(+)</text>
        <dbReference type="Rhea" id="RHEA:27982"/>
        <dbReference type="ChEBI" id="CHEBI:15377"/>
        <dbReference type="ChEBI" id="CHEBI:15378"/>
        <dbReference type="ChEBI" id="CHEBI:28938"/>
        <dbReference type="ChEBI" id="CHEBI:30616"/>
        <dbReference type="ChEBI" id="CHEBI:43474"/>
        <dbReference type="ChEBI" id="CHEBI:45075"/>
        <dbReference type="ChEBI" id="CHEBI:61036"/>
        <dbReference type="ChEBI" id="CHEBI:456216"/>
        <dbReference type="EC" id="6.3.4.20"/>
    </reaction>
</comment>
<comment type="cofactor">
    <cofactor evidence="1">
        <name>Zn(2+)</name>
        <dbReference type="ChEBI" id="CHEBI:29105"/>
    </cofactor>
    <text evidence="1">Binds 1 zinc ion per subunit.</text>
</comment>
<comment type="pathway">
    <text evidence="1">Purine metabolism; 7-cyano-7-deazaguanine biosynthesis.</text>
</comment>
<comment type="similarity">
    <text evidence="1">Belongs to the QueC family.</text>
</comment>
<dbReference type="EC" id="6.3.4.20" evidence="1"/>
<dbReference type="EMBL" id="CP000453">
    <property type="protein sequence ID" value="ABI58037.1"/>
    <property type="molecule type" value="Genomic_DNA"/>
</dbReference>
<dbReference type="RefSeq" id="WP_011630430.1">
    <property type="nucleotide sequence ID" value="NC_008340.1"/>
</dbReference>
<dbReference type="SMR" id="Q0A550"/>
<dbReference type="KEGG" id="aeh:Mlg_2697"/>
<dbReference type="eggNOG" id="COG0603">
    <property type="taxonomic scope" value="Bacteria"/>
</dbReference>
<dbReference type="HOGENOM" id="CLU_081854_0_0_6"/>
<dbReference type="OrthoDB" id="9789567at2"/>
<dbReference type="UniPathway" id="UPA00391"/>
<dbReference type="Proteomes" id="UP000001962">
    <property type="component" value="Chromosome"/>
</dbReference>
<dbReference type="GO" id="GO:0005524">
    <property type="term" value="F:ATP binding"/>
    <property type="evidence" value="ECO:0007669"/>
    <property type="project" value="UniProtKB-UniRule"/>
</dbReference>
<dbReference type="GO" id="GO:0016879">
    <property type="term" value="F:ligase activity, forming carbon-nitrogen bonds"/>
    <property type="evidence" value="ECO:0007669"/>
    <property type="project" value="UniProtKB-UniRule"/>
</dbReference>
<dbReference type="GO" id="GO:0008270">
    <property type="term" value="F:zinc ion binding"/>
    <property type="evidence" value="ECO:0007669"/>
    <property type="project" value="UniProtKB-UniRule"/>
</dbReference>
<dbReference type="GO" id="GO:0008616">
    <property type="term" value="P:queuosine biosynthetic process"/>
    <property type="evidence" value="ECO:0007669"/>
    <property type="project" value="UniProtKB-UniRule"/>
</dbReference>
<dbReference type="CDD" id="cd01995">
    <property type="entry name" value="QueC-like"/>
    <property type="match status" value="1"/>
</dbReference>
<dbReference type="Gene3D" id="3.40.50.620">
    <property type="entry name" value="HUPs"/>
    <property type="match status" value="1"/>
</dbReference>
<dbReference type="HAMAP" id="MF_01633">
    <property type="entry name" value="QueC"/>
    <property type="match status" value="1"/>
</dbReference>
<dbReference type="InterPro" id="IPR018317">
    <property type="entry name" value="QueC"/>
</dbReference>
<dbReference type="InterPro" id="IPR014729">
    <property type="entry name" value="Rossmann-like_a/b/a_fold"/>
</dbReference>
<dbReference type="NCBIfam" id="TIGR00364">
    <property type="entry name" value="7-cyano-7-deazaguanine synthase QueC"/>
    <property type="match status" value="1"/>
</dbReference>
<dbReference type="PANTHER" id="PTHR42914">
    <property type="entry name" value="7-CYANO-7-DEAZAGUANINE SYNTHASE"/>
    <property type="match status" value="1"/>
</dbReference>
<dbReference type="PANTHER" id="PTHR42914:SF1">
    <property type="entry name" value="7-CYANO-7-DEAZAGUANINE SYNTHASE"/>
    <property type="match status" value="1"/>
</dbReference>
<dbReference type="Pfam" id="PF06508">
    <property type="entry name" value="QueC"/>
    <property type="match status" value="1"/>
</dbReference>
<dbReference type="PIRSF" id="PIRSF006293">
    <property type="entry name" value="ExsB"/>
    <property type="match status" value="1"/>
</dbReference>
<dbReference type="SUPFAM" id="SSF52402">
    <property type="entry name" value="Adenine nucleotide alpha hydrolases-like"/>
    <property type="match status" value="1"/>
</dbReference>